<name>ILVH_MYCS2</name>
<comment type="catalytic activity">
    <reaction>
        <text>2 pyruvate + H(+) = (2S)-2-acetolactate + CO2</text>
        <dbReference type="Rhea" id="RHEA:25249"/>
        <dbReference type="ChEBI" id="CHEBI:15361"/>
        <dbReference type="ChEBI" id="CHEBI:15378"/>
        <dbReference type="ChEBI" id="CHEBI:16526"/>
        <dbReference type="ChEBI" id="CHEBI:58476"/>
        <dbReference type="EC" id="2.2.1.6"/>
    </reaction>
</comment>
<comment type="pathway">
    <text>Amino-acid biosynthesis; L-isoleucine biosynthesis; L-isoleucine from 2-oxobutanoate: step 1/4.</text>
</comment>
<comment type="pathway">
    <text>Amino-acid biosynthesis; L-valine biosynthesis; L-valine from pyruvate: step 1/4.</text>
</comment>
<comment type="subunit">
    <text evidence="1">Dimer of large and small chains.</text>
</comment>
<comment type="similarity">
    <text evidence="4">Belongs to the acetolactate synthase small subunit family.</text>
</comment>
<accession>A0QUX7</accession>
<accession>I7FJ23</accession>
<sequence>MSNGTPTHTLSVLVEDKPGVLARVSSLFSRRGFNIQSLAVGATEQKDMSRMTIVVSVEDSPLEQITKQLNKLINVIKIVEQEEDNSVSRELALIKVRADATTRGQIIEAVNLFRAKVVDVSTESLTIEATGTPEKLEALLRVLEPYGIREIAQSGVVSVSRGPRGIGAAK</sequence>
<gene>
    <name type="primary">ilvH</name>
    <name type="synonym">ilvN</name>
    <name type="ordered locus">MSMEG_2373</name>
    <name type="ordered locus">MSMEI_2313</name>
</gene>
<evidence type="ECO:0000250" key="1"/>
<evidence type="ECO:0000255" key="2">
    <source>
        <dbReference type="PROSITE-ProRule" id="PRU01007"/>
    </source>
</evidence>
<evidence type="ECO:0000269" key="3">
    <source>
    </source>
</evidence>
<evidence type="ECO:0000305" key="4"/>
<keyword id="KW-0028">Amino-acid biosynthesis</keyword>
<keyword id="KW-0100">Branched-chain amino acid biosynthesis</keyword>
<keyword id="KW-1017">Isopeptide bond</keyword>
<keyword id="KW-1185">Reference proteome</keyword>
<keyword id="KW-0808">Transferase</keyword>
<keyword id="KW-0832">Ubl conjugation</keyword>
<protein>
    <recommendedName>
        <fullName>Acetolactate synthase small subunit</fullName>
        <ecNumber>2.2.1.6</ecNumber>
    </recommendedName>
    <alternativeName>
        <fullName>Acetohydroxy-acid synthase small subunit</fullName>
        <shortName>AHAS</shortName>
        <shortName>ALS</shortName>
    </alternativeName>
</protein>
<reference key="1">
    <citation type="submission" date="2006-10" db="EMBL/GenBank/DDBJ databases">
        <authorList>
            <person name="Fleischmann R.D."/>
            <person name="Dodson R.J."/>
            <person name="Haft D.H."/>
            <person name="Merkel J.S."/>
            <person name="Nelson W.C."/>
            <person name="Fraser C.M."/>
        </authorList>
    </citation>
    <scope>NUCLEOTIDE SEQUENCE [LARGE SCALE GENOMIC DNA]</scope>
    <source>
        <strain>ATCC 700084 / mc(2)155</strain>
    </source>
</reference>
<reference key="2">
    <citation type="journal article" date="2007" name="Genome Biol.">
        <title>Interrupted coding sequences in Mycobacterium smegmatis: authentic mutations or sequencing errors?</title>
        <authorList>
            <person name="Deshayes C."/>
            <person name="Perrodou E."/>
            <person name="Gallien S."/>
            <person name="Euphrasie D."/>
            <person name="Schaeffer C."/>
            <person name="Van-Dorsselaer A."/>
            <person name="Poch O."/>
            <person name="Lecompte O."/>
            <person name="Reyrat J.-M."/>
        </authorList>
    </citation>
    <scope>NUCLEOTIDE SEQUENCE [LARGE SCALE GENOMIC DNA]</scope>
    <source>
        <strain>ATCC 700084 / mc(2)155</strain>
    </source>
</reference>
<reference key="3">
    <citation type="journal article" date="2009" name="Genome Res.">
        <title>Ortho-proteogenomics: multiple proteomes investigation through orthology and a new MS-based protocol.</title>
        <authorList>
            <person name="Gallien S."/>
            <person name="Perrodou E."/>
            <person name="Carapito C."/>
            <person name="Deshayes C."/>
            <person name="Reyrat J.-M."/>
            <person name="Van Dorsselaer A."/>
            <person name="Poch O."/>
            <person name="Schaeffer C."/>
            <person name="Lecompte O."/>
        </authorList>
    </citation>
    <scope>NUCLEOTIDE SEQUENCE [LARGE SCALE GENOMIC DNA]</scope>
    <source>
        <strain>ATCC 700084 / mc(2)155</strain>
    </source>
</reference>
<reference key="4">
    <citation type="journal article" date="2010" name="Mol. Biosyst.">
        <title>Expansion of the mycobacterial 'PUPylome'.</title>
        <authorList>
            <person name="Watrous J."/>
            <person name="Burns K."/>
            <person name="Liu W.T."/>
            <person name="Patel A."/>
            <person name="Hook V."/>
            <person name="Bafna V."/>
            <person name="Barry C.E. III"/>
            <person name="Bark S."/>
            <person name="Dorrestein P.C."/>
        </authorList>
    </citation>
    <scope>PUPYLATION AT LYS-46</scope>
    <scope>IDENTIFICATION BY MASS SPECTROMETRY</scope>
</reference>
<proteinExistence type="evidence at protein level"/>
<dbReference type="EC" id="2.2.1.6"/>
<dbReference type="EMBL" id="CP000480">
    <property type="protein sequence ID" value="ABK72789.1"/>
    <property type="molecule type" value="Genomic_DNA"/>
</dbReference>
<dbReference type="EMBL" id="CP001663">
    <property type="protein sequence ID" value="AFP38783.1"/>
    <property type="molecule type" value="Genomic_DNA"/>
</dbReference>
<dbReference type="RefSeq" id="WP_003893741.1">
    <property type="nucleotide sequence ID" value="NZ_SIJM01000012.1"/>
</dbReference>
<dbReference type="RefSeq" id="YP_886715.1">
    <property type="nucleotide sequence ID" value="NC_008596.1"/>
</dbReference>
<dbReference type="SMR" id="A0QUX7"/>
<dbReference type="STRING" id="246196.MSMEG_2373"/>
<dbReference type="PaxDb" id="246196-MSMEI_2313"/>
<dbReference type="GeneID" id="93457164"/>
<dbReference type="KEGG" id="msb:LJ00_11800"/>
<dbReference type="KEGG" id="msg:MSMEI_2313"/>
<dbReference type="KEGG" id="msm:MSMEG_2373"/>
<dbReference type="PATRIC" id="fig|246196.19.peg.2339"/>
<dbReference type="eggNOG" id="COG0440">
    <property type="taxonomic scope" value="Bacteria"/>
</dbReference>
<dbReference type="OrthoDB" id="9787365at2"/>
<dbReference type="UniPathway" id="UPA00047">
    <property type="reaction ID" value="UER00055"/>
</dbReference>
<dbReference type="UniPathway" id="UPA00049">
    <property type="reaction ID" value="UER00059"/>
</dbReference>
<dbReference type="Proteomes" id="UP000000757">
    <property type="component" value="Chromosome"/>
</dbReference>
<dbReference type="Proteomes" id="UP000006158">
    <property type="component" value="Chromosome"/>
</dbReference>
<dbReference type="GO" id="GO:0005829">
    <property type="term" value="C:cytosol"/>
    <property type="evidence" value="ECO:0007669"/>
    <property type="project" value="TreeGrafter"/>
</dbReference>
<dbReference type="GO" id="GO:0003984">
    <property type="term" value="F:acetolactate synthase activity"/>
    <property type="evidence" value="ECO:0007669"/>
    <property type="project" value="UniProtKB-EC"/>
</dbReference>
<dbReference type="GO" id="GO:1990610">
    <property type="term" value="F:acetolactate synthase regulator activity"/>
    <property type="evidence" value="ECO:0007669"/>
    <property type="project" value="InterPro"/>
</dbReference>
<dbReference type="GO" id="GO:0009097">
    <property type="term" value="P:isoleucine biosynthetic process"/>
    <property type="evidence" value="ECO:0007669"/>
    <property type="project" value="UniProtKB-UniPathway"/>
</dbReference>
<dbReference type="GO" id="GO:0009099">
    <property type="term" value="P:L-valine biosynthetic process"/>
    <property type="evidence" value="ECO:0007669"/>
    <property type="project" value="UniProtKB-UniPathway"/>
</dbReference>
<dbReference type="CDD" id="cd04878">
    <property type="entry name" value="ACT_AHAS"/>
    <property type="match status" value="1"/>
</dbReference>
<dbReference type="FunFam" id="3.30.70.1150:FF:000001">
    <property type="entry name" value="Acetolactate synthase small subunit"/>
    <property type="match status" value="1"/>
</dbReference>
<dbReference type="FunFam" id="3.30.70.260:FF:000001">
    <property type="entry name" value="Acetolactate synthase, small subunit"/>
    <property type="match status" value="1"/>
</dbReference>
<dbReference type="Gene3D" id="3.30.70.260">
    <property type="match status" value="1"/>
</dbReference>
<dbReference type="Gene3D" id="3.30.70.1150">
    <property type="entry name" value="ACT-like. Chain A, domain 2"/>
    <property type="match status" value="1"/>
</dbReference>
<dbReference type="InterPro" id="IPR004789">
    <property type="entry name" value="Acetalactate_synth_ssu"/>
</dbReference>
<dbReference type="InterPro" id="IPR027271">
    <property type="entry name" value="Acetolactate_synth/TF_NikR_C"/>
</dbReference>
<dbReference type="InterPro" id="IPR019455">
    <property type="entry name" value="Acetolactate_synth_ssu_C"/>
</dbReference>
<dbReference type="InterPro" id="IPR045865">
    <property type="entry name" value="ACT-like_dom_sf"/>
</dbReference>
<dbReference type="InterPro" id="IPR002912">
    <property type="entry name" value="ACT_dom"/>
</dbReference>
<dbReference type="InterPro" id="IPR039557">
    <property type="entry name" value="AHAS_ACT"/>
</dbReference>
<dbReference type="InterPro" id="IPR054480">
    <property type="entry name" value="AHAS_small-like_ACT"/>
</dbReference>
<dbReference type="NCBIfam" id="TIGR00119">
    <property type="entry name" value="acolac_sm"/>
    <property type="match status" value="1"/>
</dbReference>
<dbReference type="NCBIfam" id="NF008864">
    <property type="entry name" value="PRK11895.1"/>
    <property type="match status" value="1"/>
</dbReference>
<dbReference type="PANTHER" id="PTHR30239">
    <property type="entry name" value="ACETOLACTATE SYNTHASE SMALL SUBUNIT"/>
    <property type="match status" value="1"/>
</dbReference>
<dbReference type="PANTHER" id="PTHR30239:SF0">
    <property type="entry name" value="ACETOLACTATE SYNTHASE SMALL SUBUNIT 1, CHLOROPLASTIC"/>
    <property type="match status" value="1"/>
</dbReference>
<dbReference type="Pfam" id="PF22629">
    <property type="entry name" value="ACT_AHAS_ss"/>
    <property type="match status" value="1"/>
</dbReference>
<dbReference type="Pfam" id="PF10369">
    <property type="entry name" value="ALS_ss_C"/>
    <property type="match status" value="1"/>
</dbReference>
<dbReference type="SUPFAM" id="SSF55021">
    <property type="entry name" value="ACT-like"/>
    <property type="match status" value="2"/>
</dbReference>
<dbReference type="PROSITE" id="PS51671">
    <property type="entry name" value="ACT"/>
    <property type="match status" value="1"/>
</dbReference>
<organism>
    <name type="scientific">Mycolicibacterium smegmatis (strain ATCC 700084 / mc(2)155)</name>
    <name type="common">Mycobacterium smegmatis</name>
    <dbReference type="NCBI Taxonomy" id="246196"/>
    <lineage>
        <taxon>Bacteria</taxon>
        <taxon>Bacillati</taxon>
        <taxon>Actinomycetota</taxon>
        <taxon>Actinomycetes</taxon>
        <taxon>Mycobacteriales</taxon>
        <taxon>Mycobacteriaceae</taxon>
        <taxon>Mycolicibacterium</taxon>
    </lineage>
</organism>
<feature type="chain" id="PRO_0000396815" description="Acetolactate synthase small subunit">
    <location>
        <begin position="1"/>
        <end position="170"/>
    </location>
</feature>
<feature type="domain" description="ACT" evidence="2">
    <location>
        <begin position="9"/>
        <end position="83"/>
    </location>
</feature>
<feature type="cross-link" description="Isoglutamyl lysine isopeptide (Lys-Gln) (interchain with Q-Cter in protein Pup)" evidence="3">
    <location>
        <position position="46"/>
    </location>
</feature>